<name>HIS2_TERTT</name>
<dbReference type="EC" id="3.6.1.31" evidence="1"/>
<dbReference type="EMBL" id="CP001614">
    <property type="protein sequence ID" value="ACS93582.1"/>
    <property type="molecule type" value="Genomic_DNA"/>
</dbReference>
<dbReference type="RefSeq" id="WP_015820976.1">
    <property type="nucleotide sequence ID" value="NC_012997.1"/>
</dbReference>
<dbReference type="SMR" id="C6AR38"/>
<dbReference type="STRING" id="377629.TERTU_3195"/>
<dbReference type="GeneID" id="58410580"/>
<dbReference type="KEGG" id="ttu:TERTU_3195"/>
<dbReference type="eggNOG" id="COG0140">
    <property type="taxonomic scope" value="Bacteria"/>
</dbReference>
<dbReference type="HOGENOM" id="CLU_123337_1_2_6"/>
<dbReference type="OrthoDB" id="9795769at2"/>
<dbReference type="UniPathway" id="UPA00031">
    <property type="reaction ID" value="UER00007"/>
</dbReference>
<dbReference type="Proteomes" id="UP000009080">
    <property type="component" value="Chromosome"/>
</dbReference>
<dbReference type="GO" id="GO:0005737">
    <property type="term" value="C:cytoplasm"/>
    <property type="evidence" value="ECO:0007669"/>
    <property type="project" value="UniProtKB-SubCell"/>
</dbReference>
<dbReference type="GO" id="GO:0005524">
    <property type="term" value="F:ATP binding"/>
    <property type="evidence" value="ECO:0007669"/>
    <property type="project" value="UniProtKB-KW"/>
</dbReference>
<dbReference type="GO" id="GO:0004636">
    <property type="term" value="F:phosphoribosyl-ATP diphosphatase activity"/>
    <property type="evidence" value="ECO:0007669"/>
    <property type="project" value="UniProtKB-UniRule"/>
</dbReference>
<dbReference type="GO" id="GO:0000105">
    <property type="term" value="P:L-histidine biosynthetic process"/>
    <property type="evidence" value="ECO:0007669"/>
    <property type="project" value="UniProtKB-UniRule"/>
</dbReference>
<dbReference type="CDD" id="cd11534">
    <property type="entry name" value="NTP-PPase_HisIE_like"/>
    <property type="match status" value="1"/>
</dbReference>
<dbReference type="Gene3D" id="1.10.287.1080">
    <property type="entry name" value="MazG-like"/>
    <property type="match status" value="1"/>
</dbReference>
<dbReference type="HAMAP" id="MF_01020">
    <property type="entry name" value="HisE"/>
    <property type="match status" value="1"/>
</dbReference>
<dbReference type="InterPro" id="IPR008179">
    <property type="entry name" value="HisE"/>
</dbReference>
<dbReference type="InterPro" id="IPR021130">
    <property type="entry name" value="PRib-ATP_PPHydrolase-like"/>
</dbReference>
<dbReference type="NCBIfam" id="TIGR03188">
    <property type="entry name" value="histidine_hisI"/>
    <property type="match status" value="1"/>
</dbReference>
<dbReference type="NCBIfam" id="NF001611">
    <property type="entry name" value="PRK00400.1-3"/>
    <property type="match status" value="1"/>
</dbReference>
<dbReference type="PANTHER" id="PTHR42945">
    <property type="entry name" value="HISTIDINE BIOSYNTHESIS BIFUNCTIONAL PROTEIN"/>
    <property type="match status" value="1"/>
</dbReference>
<dbReference type="PANTHER" id="PTHR42945:SF9">
    <property type="entry name" value="HISTIDINE BIOSYNTHESIS BIFUNCTIONAL PROTEIN HISIE"/>
    <property type="match status" value="1"/>
</dbReference>
<dbReference type="Pfam" id="PF01503">
    <property type="entry name" value="PRA-PH"/>
    <property type="match status" value="1"/>
</dbReference>
<dbReference type="SUPFAM" id="SSF101386">
    <property type="entry name" value="all-alpha NTP pyrophosphatases"/>
    <property type="match status" value="1"/>
</dbReference>
<evidence type="ECO:0000255" key="1">
    <source>
        <dbReference type="HAMAP-Rule" id="MF_01020"/>
    </source>
</evidence>
<organism>
    <name type="scientific">Teredinibacter turnerae (strain ATCC 39867 / T7901)</name>
    <dbReference type="NCBI Taxonomy" id="377629"/>
    <lineage>
        <taxon>Bacteria</taxon>
        <taxon>Pseudomonadati</taxon>
        <taxon>Pseudomonadota</taxon>
        <taxon>Gammaproteobacteria</taxon>
        <taxon>Cellvibrionales</taxon>
        <taxon>Cellvibrionaceae</taxon>
        <taxon>Teredinibacter</taxon>
    </lineage>
</organism>
<accession>C6AR38</accession>
<feature type="chain" id="PRO_1000213296" description="Phosphoribosyl-ATP pyrophosphatase">
    <location>
        <begin position="1"/>
        <end position="110"/>
    </location>
</feature>
<keyword id="KW-0028">Amino-acid biosynthesis</keyword>
<keyword id="KW-0067">ATP-binding</keyword>
<keyword id="KW-0963">Cytoplasm</keyword>
<keyword id="KW-0368">Histidine biosynthesis</keyword>
<keyword id="KW-0378">Hydrolase</keyword>
<keyword id="KW-0547">Nucleotide-binding</keyword>
<keyword id="KW-1185">Reference proteome</keyword>
<proteinExistence type="inferred from homology"/>
<sequence length="110" mass="12341">MSDVLAELDKVLAQRKNAGDPESSYVAKLHHKGLNKILEKVGEECTETILAAKDAQHDSDTQHLIYETADLWFHSLVMLSHLGLSAEDVLNELARRFDLSGLEEKARRQS</sequence>
<comment type="catalytic activity">
    <reaction evidence="1">
        <text>1-(5-phospho-beta-D-ribosyl)-ATP + H2O = 1-(5-phospho-beta-D-ribosyl)-5'-AMP + diphosphate + H(+)</text>
        <dbReference type="Rhea" id="RHEA:22828"/>
        <dbReference type="ChEBI" id="CHEBI:15377"/>
        <dbReference type="ChEBI" id="CHEBI:15378"/>
        <dbReference type="ChEBI" id="CHEBI:33019"/>
        <dbReference type="ChEBI" id="CHEBI:59457"/>
        <dbReference type="ChEBI" id="CHEBI:73183"/>
        <dbReference type="EC" id="3.6.1.31"/>
    </reaction>
</comment>
<comment type="pathway">
    <text evidence="1">Amino-acid biosynthesis; L-histidine biosynthesis; L-histidine from 5-phospho-alpha-D-ribose 1-diphosphate: step 2/9.</text>
</comment>
<comment type="subcellular location">
    <subcellularLocation>
        <location evidence="1">Cytoplasm</location>
    </subcellularLocation>
</comment>
<comment type="similarity">
    <text evidence="1">Belongs to the PRA-PH family.</text>
</comment>
<protein>
    <recommendedName>
        <fullName evidence="1">Phosphoribosyl-ATP pyrophosphatase</fullName>
        <shortName evidence="1">PRA-PH</shortName>
        <ecNumber evidence="1">3.6.1.31</ecNumber>
    </recommendedName>
</protein>
<reference key="1">
    <citation type="journal article" date="2009" name="PLoS ONE">
        <title>The complete genome of Teredinibacter turnerae T7901: an intracellular endosymbiont of marine wood-boring bivalves (shipworms).</title>
        <authorList>
            <person name="Yang J.C."/>
            <person name="Madupu R."/>
            <person name="Durkin A.S."/>
            <person name="Ekborg N.A."/>
            <person name="Pedamallu C.S."/>
            <person name="Hostetler J.B."/>
            <person name="Radune D."/>
            <person name="Toms B.S."/>
            <person name="Henrissat B."/>
            <person name="Coutinho P.M."/>
            <person name="Schwarz S."/>
            <person name="Field L."/>
            <person name="Trindade-Silva A.E."/>
            <person name="Soares C.A.G."/>
            <person name="Elshahawi S."/>
            <person name="Hanora A."/>
            <person name="Schmidt E.W."/>
            <person name="Haygood M.G."/>
            <person name="Posfai J."/>
            <person name="Benner J."/>
            <person name="Madinger C."/>
            <person name="Nove J."/>
            <person name="Anton B."/>
            <person name="Chaudhary K."/>
            <person name="Foster J."/>
            <person name="Holman A."/>
            <person name="Kumar S."/>
            <person name="Lessard P.A."/>
            <person name="Luyten Y.A."/>
            <person name="Slatko B."/>
            <person name="Wood N."/>
            <person name="Wu B."/>
            <person name="Teplitski M."/>
            <person name="Mougous J.D."/>
            <person name="Ward N."/>
            <person name="Eisen J.A."/>
            <person name="Badger J.H."/>
            <person name="Distel D.L."/>
        </authorList>
    </citation>
    <scope>NUCLEOTIDE SEQUENCE [LARGE SCALE GENOMIC DNA]</scope>
    <source>
        <strain>ATCC 39867 / T7901</strain>
    </source>
</reference>
<gene>
    <name evidence="1" type="primary">hisE</name>
    <name type="ordered locus">TERTU_3195</name>
</gene>